<reference key="1">
    <citation type="journal article" date="2000" name="Science">
        <title>The genome sequence of Drosophila melanogaster.</title>
        <authorList>
            <person name="Adams M.D."/>
            <person name="Celniker S.E."/>
            <person name="Holt R.A."/>
            <person name="Evans C.A."/>
            <person name="Gocayne J.D."/>
            <person name="Amanatides P.G."/>
            <person name="Scherer S.E."/>
            <person name="Li P.W."/>
            <person name="Hoskins R.A."/>
            <person name="Galle R.F."/>
            <person name="George R.A."/>
            <person name="Lewis S.E."/>
            <person name="Richards S."/>
            <person name="Ashburner M."/>
            <person name="Henderson S.N."/>
            <person name="Sutton G.G."/>
            <person name="Wortman J.R."/>
            <person name="Yandell M.D."/>
            <person name="Zhang Q."/>
            <person name="Chen L.X."/>
            <person name="Brandon R.C."/>
            <person name="Rogers Y.-H.C."/>
            <person name="Blazej R.G."/>
            <person name="Champe M."/>
            <person name="Pfeiffer B.D."/>
            <person name="Wan K.H."/>
            <person name="Doyle C."/>
            <person name="Baxter E.G."/>
            <person name="Helt G."/>
            <person name="Nelson C.R."/>
            <person name="Miklos G.L.G."/>
            <person name="Abril J.F."/>
            <person name="Agbayani A."/>
            <person name="An H.-J."/>
            <person name="Andrews-Pfannkoch C."/>
            <person name="Baldwin D."/>
            <person name="Ballew R.M."/>
            <person name="Basu A."/>
            <person name="Baxendale J."/>
            <person name="Bayraktaroglu L."/>
            <person name="Beasley E.M."/>
            <person name="Beeson K.Y."/>
            <person name="Benos P.V."/>
            <person name="Berman B.P."/>
            <person name="Bhandari D."/>
            <person name="Bolshakov S."/>
            <person name="Borkova D."/>
            <person name="Botchan M.R."/>
            <person name="Bouck J."/>
            <person name="Brokstein P."/>
            <person name="Brottier P."/>
            <person name="Burtis K.C."/>
            <person name="Busam D.A."/>
            <person name="Butler H."/>
            <person name="Cadieu E."/>
            <person name="Center A."/>
            <person name="Chandra I."/>
            <person name="Cherry J.M."/>
            <person name="Cawley S."/>
            <person name="Dahlke C."/>
            <person name="Davenport L.B."/>
            <person name="Davies P."/>
            <person name="de Pablos B."/>
            <person name="Delcher A."/>
            <person name="Deng Z."/>
            <person name="Mays A.D."/>
            <person name="Dew I."/>
            <person name="Dietz S.M."/>
            <person name="Dodson K."/>
            <person name="Doup L.E."/>
            <person name="Downes M."/>
            <person name="Dugan-Rocha S."/>
            <person name="Dunkov B.C."/>
            <person name="Dunn P."/>
            <person name="Durbin K.J."/>
            <person name="Evangelista C.C."/>
            <person name="Ferraz C."/>
            <person name="Ferriera S."/>
            <person name="Fleischmann W."/>
            <person name="Fosler C."/>
            <person name="Gabrielian A.E."/>
            <person name="Garg N.S."/>
            <person name="Gelbart W.M."/>
            <person name="Glasser K."/>
            <person name="Glodek A."/>
            <person name="Gong F."/>
            <person name="Gorrell J.H."/>
            <person name="Gu Z."/>
            <person name="Guan P."/>
            <person name="Harris M."/>
            <person name="Harris N.L."/>
            <person name="Harvey D.A."/>
            <person name="Heiman T.J."/>
            <person name="Hernandez J.R."/>
            <person name="Houck J."/>
            <person name="Hostin D."/>
            <person name="Houston K.A."/>
            <person name="Howland T.J."/>
            <person name="Wei M.-H."/>
            <person name="Ibegwam C."/>
            <person name="Jalali M."/>
            <person name="Kalush F."/>
            <person name="Karpen G.H."/>
            <person name="Ke Z."/>
            <person name="Kennison J.A."/>
            <person name="Ketchum K.A."/>
            <person name="Kimmel B.E."/>
            <person name="Kodira C.D."/>
            <person name="Kraft C.L."/>
            <person name="Kravitz S."/>
            <person name="Kulp D."/>
            <person name="Lai Z."/>
            <person name="Lasko P."/>
            <person name="Lei Y."/>
            <person name="Levitsky A.A."/>
            <person name="Li J.H."/>
            <person name="Li Z."/>
            <person name="Liang Y."/>
            <person name="Lin X."/>
            <person name="Liu X."/>
            <person name="Mattei B."/>
            <person name="McIntosh T.C."/>
            <person name="McLeod M.P."/>
            <person name="McPherson D."/>
            <person name="Merkulov G."/>
            <person name="Milshina N.V."/>
            <person name="Mobarry C."/>
            <person name="Morris J."/>
            <person name="Moshrefi A."/>
            <person name="Mount S.M."/>
            <person name="Moy M."/>
            <person name="Murphy B."/>
            <person name="Murphy L."/>
            <person name="Muzny D.M."/>
            <person name="Nelson D.L."/>
            <person name="Nelson D.R."/>
            <person name="Nelson K.A."/>
            <person name="Nixon K."/>
            <person name="Nusskern D.R."/>
            <person name="Pacleb J.M."/>
            <person name="Palazzolo M."/>
            <person name="Pittman G.S."/>
            <person name="Pan S."/>
            <person name="Pollard J."/>
            <person name="Puri V."/>
            <person name="Reese M.G."/>
            <person name="Reinert K."/>
            <person name="Remington K."/>
            <person name="Saunders R.D.C."/>
            <person name="Scheeler F."/>
            <person name="Shen H."/>
            <person name="Shue B.C."/>
            <person name="Siden-Kiamos I."/>
            <person name="Simpson M."/>
            <person name="Skupski M.P."/>
            <person name="Smith T.J."/>
            <person name="Spier E."/>
            <person name="Spradling A.C."/>
            <person name="Stapleton M."/>
            <person name="Strong R."/>
            <person name="Sun E."/>
            <person name="Svirskas R."/>
            <person name="Tector C."/>
            <person name="Turner R."/>
            <person name="Venter E."/>
            <person name="Wang A.H."/>
            <person name="Wang X."/>
            <person name="Wang Z.-Y."/>
            <person name="Wassarman D.A."/>
            <person name="Weinstock G.M."/>
            <person name="Weissenbach J."/>
            <person name="Williams S.M."/>
            <person name="Woodage T."/>
            <person name="Worley K.C."/>
            <person name="Wu D."/>
            <person name="Yang S."/>
            <person name="Yao Q.A."/>
            <person name="Ye J."/>
            <person name="Yeh R.-F."/>
            <person name="Zaveri J.S."/>
            <person name="Zhan M."/>
            <person name="Zhang G."/>
            <person name="Zhao Q."/>
            <person name="Zheng L."/>
            <person name="Zheng X.H."/>
            <person name="Zhong F.N."/>
            <person name="Zhong W."/>
            <person name="Zhou X."/>
            <person name="Zhu S.C."/>
            <person name="Zhu X."/>
            <person name="Smith H.O."/>
            <person name="Gibbs R.A."/>
            <person name="Myers E.W."/>
            <person name="Rubin G.M."/>
            <person name="Venter J.C."/>
        </authorList>
    </citation>
    <scope>NUCLEOTIDE SEQUENCE [LARGE SCALE GENOMIC DNA]</scope>
    <source>
        <strain>Berkeley</strain>
    </source>
</reference>
<reference evidence="8" key="2">
    <citation type="journal article" date="2002" name="Genome Biol.">
        <title>Annotation of the Drosophila melanogaster euchromatic genome: a systematic review.</title>
        <authorList>
            <person name="Misra S."/>
            <person name="Crosby M.A."/>
            <person name="Mungall C.J."/>
            <person name="Matthews B.B."/>
            <person name="Campbell K.S."/>
            <person name="Hradecky P."/>
            <person name="Huang Y."/>
            <person name="Kaminker J.S."/>
            <person name="Millburn G.H."/>
            <person name="Prochnik S.E."/>
            <person name="Smith C.D."/>
            <person name="Tupy J.L."/>
            <person name="Whitfield E.J."/>
            <person name="Bayraktaroglu L."/>
            <person name="Berman B.P."/>
            <person name="Bettencourt B.R."/>
            <person name="Celniker S.E."/>
            <person name="de Grey A.D.N.J."/>
            <person name="Drysdale R.A."/>
            <person name="Harris N.L."/>
            <person name="Richter J."/>
            <person name="Russo S."/>
            <person name="Schroeder A.J."/>
            <person name="Shu S.Q."/>
            <person name="Stapleton M."/>
            <person name="Yamada C."/>
            <person name="Ashburner M."/>
            <person name="Gelbart W.M."/>
            <person name="Rubin G.M."/>
            <person name="Lewis S.E."/>
        </authorList>
    </citation>
    <scope>GENOME REANNOTATION</scope>
    <source>
        <strain>Berkeley</strain>
    </source>
</reference>
<reference evidence="8" key="3">
    <citation type="journal article" date="2002" name="Genome Biol.">
        <title>A Drosophila full-length cDNA resource.</title>
        <authorList>
            <person name="Stapleton M."/>
            <person name="Carlson J.W."/>
            <person name="Brokstein P."/>
            <person name="Yu C."/>
            <person name="Champe M."/>
            <person name="George R.A."/>
            <person name="Guarin H."/>
            <person name="Kronmiller B."/>
            <person name="Pacleb J.M."/>
            <person name="Park S."/>
            <person name="Wan K.H."/>
            <person name="Rubin G.M."/>
            <person name="Celniker S.E."/>
        </authorList>
    </citation>
    <scope>NUCLEOTIDE SEQUENCE [LARGE SCALE MRNA]</scope>
    <source>
        <strain>Berkeley</strain>
        <tissue>Embryo</tissue>
    </source>
</reference>
<reference key="4">
    <citation type="submission" date="2007-03" db="EMBL/GenBank/DDBJ databases">
        <authorList>
            <person name="Stapleton M."/>
            <person name="Brokstein P."/>
            <person name="Hong L."/>
            <person name="Agbayani A."/>
            <person name="Carlson J.W."/>
            <person name="Champe M."/>
            <person name="Chavez C."/>
            <person name="Dorsett V."/>
            <person name="Dresnek D."/>
            <person name="Farfan D."/>
            <person name="Frise E."/>
            <person name="George R.A."/>
            <person name="Gonzalez M."/>
            <person name="Guarin H."/>
            <person name="Kapadia B."/>
            <person name="Kronmiller B."/>
            <person name="Li P.W."/>
            <person name="Liao G."/>
            <person name="Miranda A."/>
            <person name="Mungall C.J."/>
            <person name="Nunoo J."/>
            <person name="Pacleb J.M."/>
            <person name="Paragas V."/>
            <person name="Park S."/>
            <person name="Patel S."/>
            <person name="Phouanenavong S."/>
            <person name="Wan K.H."/>
            <person name="Yu C."/>
            <person name="Lewis S.E."/>
            <person name="Rubin G.M."/>
            <person name="Celniker S.E."/>
        </authorList>
    </citation>
    <scope>NUCLEOTIDE SEQUENCE [LARGE SCALE MRNA]</scope>
    <source>
        <strain>Berkeley</strain>
        <tissue>Embryo</tissue>
    </source>
</reference>
<reference evidence="8" key="5">
    <citation type="journal article" date="1996" name="Genetics">
        <title>Identification of immune system and response genes, and novel mutations causing melanotic tumor formation in Drosophila melanogaster.</title>
        <authorList>
            <person name="Rodriguez A."/>
            <person name="Zhou Z."/>
            <person name="Tang M.L."/>
            <person name="Meller S."/>
            <person name="Chen J."/>
            <person name="Bellen H."/>
            <person name="Kimbrell D.A."/>
        </authorList>
    </citation>
    <scope>FUNCTION</scope>
    <scope>TISSUE SPECIFICITY</scope>
</reference>
<reference key="6">
    <citation type="journal article" date="2008" name="J. Proteome Res.">
        <title>Phosphoproteome analysis of Drosophila melanogaster embryos.</title>
        <authorList>
            <person name="Zhai B."/>
            <person name="Villen J."/>
            <person name="Beausoleil S.A."/>
            <person name="Mintseris J."/>
            <person name="Gygi S.P."/>
        </authorList>
    </citation>
    <scope>PHOSPHORYLATION [LARGE SCALE ANALYSIS] AT SER-107; SER-470; SER-475 AND SER-506</scope>
    <scope>IDENTIFICATION BY MASS SPECTROMETRY</scope>
    <source>
        <tissue>Embryo</tissue>
    </source>
</reference>
<reference key="7">
    <citation type="journal article" date="2008" name="Nature">
        <title>Mei-P26 regulates microRNAs and cell growth in the Drosophila ovarian stem cell lineage.</title>
        <authorList>
            <person name="Neumueller R.A."/>
            <person name="Betschinger J."/>
            <person name="Fischer A."/>
            <person name="Bushati N."/>
            <person name="Poernbacher I."/>
            <person name="Mechtler K."/>
            <person name="Cohen S.M."/>
            <person name="Knoblich J.A."/>
        </authorList>
    </citation>
    <scope>INTERACTION WITH AGO1</scope>
</reference>
<reference key="8">
    <citation type="journal article" date="2008" name="Nat. Cell Biol.">
        <title>The NHL-domain protein Wech is crucial for the integrin-cytoskeleton link.</title>
        <authorList>
            <person name="Loeer B."/>
            <person name="Bauer R."/>
            <person name="Bornheim R."/>
            <person name="Grell J."/>
            <person name="Kremmer E."/>
            <person name="Kolanus W."/>
            <person name="Hoch M."/>
        </authorList>
    </citation>
    <scope>FUNCTION</scope>
    <scope>TISSUE SPECIFICITY</scope>
    <scope>DEVELOPMENTAL STAGE</scope>
    <scope>DISRUPTION PHENOTYPE</scope>
</reference>
<reference key="9">
    <citation type="journal article" date="2012" name="Development">
        <title>Mei-P26 regulates the maintenance of ovarian germline stem cells by promoting BMP signaling.</title>
        <authorList>
            <person name="Li Y."/>
            <person name="Maines J.Z."/>
            <person name="Tastan O.Y."/>
            <person name="McKearin D.M."/>
            <person name="Buszczak M."/>
        </authorList>
    </citation>
    <scope>INTERACTION WITH MEI-P26</scope>
    <scope>TISSUE SPECIFICITY</scope>
</reference>
<keyword id="KW-0217">Developmental protein</keyword>
<keyword id="KW-0221">Differentiation</keyword>
<keyword id="KW-0479">Metal-binding</keyword>
<keyword id="KW-0517">Myogenesis</keyword>
<keyword id="KW-0597">Phosphoprotein</keyword>
<keyword id="KW-1185">Reference proteome</keyword>
<keyword id="KW-0677">Repeat</keyword>
<keyword id="KW-0862">Zinc</keyword>
<keyword id="KW-0863">Zinc-finger</keyword>
<protein>
    <recommendedName>
        <fullName>Protein wech</fullName>
    </recommendedName>
    <alternativeName>
        <fullName>Protein dappled</fullName>
    </alternativeName>
</protein>
<proteinExistence type="evidence at protein level"/>
<dbReference type="EMBL" id="AE013599">
    <property type="protein sequence ID" value="AAF59246.2"/>
    <property type="molecule type" value="Genomic_DNA"/>
</dbReference>
<dbReference type="EMBL" id="AE013599">
    <property type="protein sequence ID" value="AAM68901.1"/>
    <property type="molecule type" value="Genomic_DNA"/>
</dbReference>
<dbReference type="EMBL" id="AE013599">
    <property type="protein sequence ID" value="ACL83068.1"/>
    <property type="molecule type" value="Genomic_DNA"/>
</dbReference>
<dbReference type="EMBL" id="AE013599">
    <property type="protein sequence ID" value="ACL83069.1"/>
    <property type="molecule type" value="Genomic_DNA"/>
</dbReference>
<dbReference type="EMBL" id="AY060421">
    <property type="protein sequence ID" value="AAL25460.1"/>
    <property type="status" value="ALT_FRAME"/>
    <property type="molecule type" value="mRNA"/>
</dbReference>
<dbReference type="EMBL" id="BT010087">
    <property type="protein sequence ID" value="AAQ22556.1"/>
    <property type="molecule type" value="mRNA"/>
</dbReference>
<dbReference type="EMBL" id="BT030403">
    <property type="protein sequence ID" value="ABO52822.1"/>
    <property type="molecule type" value="mRNA"/>
</dbReference>
<dbReference type="RefSeq" id="NP_001137614.1">
    <property type="nucleotide sequence ID" value="NM_001144142.3"/>
</dbReference>
<dbReference type="RefSeq" id="NP_001137615.1">
    <property type="nucleotide sequence ID" value="NM_001144143.2"/>
</dbReference>
<dbReference type="RefSeq" id="NP_524772.2">
    <property type="nucleotide sequence ID" value="NM_080033.4"/>
</dbReference>
<dbReference type="RefSeq" id="NP_724567.1">
    <property type="nucleotide sequence ID" value="NM_165533.3"/>
</dbReference>
<dbReference type="RefSeq" id="NP_724568.1">
    <property type="nucleotide sequence ID" value="NM_165534.3"/>
</dbReference>
<dbReference type="SMR" id="Q9V4M2"/>
<dbReference type="BioGRID" id="69183">
    <property type="interactions" value="11"/>
</dbReference>
<dbReference type="DIP" id="DIP-21516N"/>
<dbReference type="FunCoup" id="Q9V4M2">
    <property type="interactions" value="30"/>
</dbReference>
<dbReference type="IntAct" id="Q9V4M2">
    <property type="interactions" value="2"/>
</dbReference>
<dbReference type="STRING" id="7227.FBpp0289359"/>
<dbReference type="GlyGen" id="Q9V4M2">
    <property type="glycosylation" value="1 site"/>
</dbReference>
<dbReference type="iPTMnet" id="Q9V4M2"/>
<dbReference type="PaxDb" id="7227-FBpp0289359"/>
<dbReference type="DNASU" id="44653"/>
<dbReference type="EnsemblMetazoa" id="FBtr0300080">
    <property type="protein sequence ID" value="FBpp0289357"/>
    <property type="gene ID" value="FBgn0259745"/>
</dbReference>
<dbReference type="EnsemblMetazoa" id="FBtr0300081">
    <property type="protein sequence ID" value="FBpp0289358"/>
    <property type="gene ID" value="FBgn0259745"/>
</dbReference>
<dbReference type="EnsemblMetazoa" id="FBtr0300082">
    <property type="protein sequence ID" value="FBpp0289359"/>
    <property type="gene ID" value="FBgn0259745"/>
</dbReference>
<dbReference type="EnsemblMetazoa" id="FBtr0300083">
    <property type="protein sequence ID" value="FBpp0289360"/>
    <property type="gene ID" value="FBgn0259745"/>
</dbReference>
<dbReference type="EnsemblMetazoa" id="FBtr0300084">
    <property type="protein sequence ID" value="FBpp0289361"/>
    <property type="gene ID" value="FBgn0259745"/>
</dbReference>
<dbReference type="GeneID" id="44653"/>
<dbReference type="KEGG" id="dme:Dmel_CG42396"/>
<dbReference type="AGR" id="FB:FBgn0259745"/>
<dbReference type="CTD" id="44653"/>
<dbReference type="FlyBase" id="FBgn0259745">
    <property type="gene designation" value="wech"/>
</dbReference>
<dbReference type="VEuPathDB" id="VectorBase:FBgn0259745"/>
<dbReference type="eggNOG" id="KOG2177">
    <property type="taxonomic scope" value="Eukaryota"/>
</dbReference>
<dbReference type="GeneTree" id="ENSGT00940000164246"/>
<dbReference type="HOGENOM" id="CLU_008645_4_0_1"/>
<dbReference type="InParanoid" id="Q9V4M2"/>
<dbReference type="OMA" id="DDKNMPI"/>
<dbReference type="OrthoDB" id="342730at2759"/>
<dbReference type="PhylomeDB" id="Q9V4M2"/>
<dbReference type="Reactome" id="R-DME-6798695">
    <property type="pathway name" value="Neutrophil degranulation"/>
</dbReference>
<dbReference type="BioGRID-ORCS" id="44653">
    <property type="hits" value="0 hits in 1 CRISPR screen"/>
</dbReference>
<dbReference type="ChiTaRS" id="wech">
    <property type="organism name" value="fly"/>
</dbReference>
<dbReference type="GenomeRNAi" id="44653"/>
<dbReference type="PRO" id="PR:Q9V4M2"/>
<dbReference type="Proteomes" id="UP000000803">
    <property type="component" value="Chromosome 2R"/>
</dbReference>
<dbReference type="Bgee" id="FBgn0259745">
    <property type="expression patterns" value="Expressed in intestinal stem cell (Drosophila) in digestive tract and 304 other cell types or tissues"/>
</dbReference>
<dbReference type="GO" id="GO:0005927">
    <property type="term" value="C:muscle tendon junction"/>
    <property type="evidence" value="ECO:0000314"/>
    <property type="project" value="FlyBase"/>
</dbReference>
<dbReference type="GO" id="GO:0030674">
    <property type="term" value="F:protein-macromolecule adaptor activity"/>
    <property type="evidence" value="ECO:0000353"/>
    <property type="project" value="FlyBase"/>
</dbReference>
<dbReference type="GO" id="GO:0008270">
    <property type="term" value="F:zinc ion binding"/>
    <property type="evidence" value="ECO:0007669"/>
    <property type="project" value="UniProtKB-KW"/>
</dbReference>
<dbReference type="GO" id="GO:0030154">
    <property type="term" value="P:cell differentiation"/>
    <property type="evidence" value="ECO:0007669"/>
    <property type="project" value="UniProtKB-KW"/>
</dbReference>
<dbReference type="GO" id="GO:0002168">
    <property type="term" value="P:instar larval development"/>
    <property type="evidence" value="ECO:0000315"/>
    <property type="project" value="UniProtKB"/>
</dbReference>
<dbReference type="GO" id="GO:0016203">
    <property type="term" value="P:muscle attachment"/>
    <property type="evidence" value="ECO:0000315"/>
    <property type="project" value="UniProtKB"/>
</dbReference>
<dbReference type="GO" id="GO:0033632">
    <property type="term" value="P:regulation of cell-cell adhesion mediated by integrin"/>
    <property type="evidence" value="ECO:0000353"/>
    <property type="project" value="FlyBase"/>
</dbReference>
<dbReference type="CDD" id="cd19757">
    <property type="entry name" value="Bbox1"/>
    <property type="match status" value="1"/>
</dbReference>
<dbReference type="CDD" id="cd19794">
    <property type="entry name" value="Bbox2_TRIM66-like"/>
    <property type="match status" value="1"/>
</dbReference>
<dbReference type="CDD" id="cd14954">
    <property type="entry name" value="NHL_TRIM71_like"/>
    <property type="match status" value="1"/>
</dbReference>
<dbReference type="FunFam" id="2.120.10.30:FF:000074">
    <property type="entry name" value="Blast:Protein wech"/>
    <property type="match status" value="1"/>
</dbReference>
<dbReference type="FunFam" id="2.120.10.30:FF:000080">
    <property type="entry name" value="E3 ubiquitin-protein ligase TRIM71"/>
    <property type="match status" value="1"/>
</dbReference>
<dbReference type="Gene3D" id="4.10.830.40">
    <property type="match status" value="1"/>
</dbReference>
<dbReference type="Gene3D" id="3.30.160.60">
    <property type="entry name" value="Classic Zinc Finger"/>
    <property type="match status" value="1"/>
</dbReference>
<dbReference type="Gene3D" id="2.120.10.30">
    <property type="entry name" value="TolB, C-terminal domain"/>
    <property type="match status" value="1"/>
</dbReference>
<dbReference type="InterPro" id="IPR011042">
    <property type="entry name" value="6-blade_b-propeller_TolB-like"/>
</dbReference>
<dbReference type="InterPro" id="IPR001258">
    <property type="entry name" value="NHL_repeat"/>
</dbReference>
<dbReference type="InterPro" id="IPR050952">
    <property type="entry name" value="TRIM-NHL_E3_ligases"/>
</dbReference>
<dbReference type="InterPro" id="IPR000315">
    <property type="entry name" value="Znf_B-box"/>
</dbReference>
<dbReference type="PANTHER" id="PTHR24104">
    <property type="entry name" value="E3 UBIQUITIN-PROTEIN LIGASE NHLRC1-RELATED"/>
    <property type="match status" value="1"/>
</dbReference>
<dbReference type="PANTHER" id="PTHR24104:SF25">
    <property type="entry name" value="PROTEIN LIN-41"/>
    <property type="match status" value="1"/>
</dbReference>
<dbReference type="Pfam" id="PF22586">
    <property type="entry name" value="ANCHR-like_BBOX"/>
    <property type="match status" value="1"/>
</dbReference>
<dbReference type="Pfam" id="PF01436">
    <property type="entry name" value="NHL"/>
    <property type="match status" value="5"/>
</dbReference>
<dbReference type="Pfam" id="PF00643">
    <property type="entry name" value="zf-B_box"/>
    <property type="match status" value="1"/>
</dbReference>
<dbReference type="SMART" id="SM00336">
    <property type="entry name" value="BBOX"/>
    <property type="match status" value="2"/>
</dbReference>
<dbReference type="SUPFAM" id="SSF57845">
    <property type="entry name" value="B-box zinc-binding domain"/>
    <property type="match status" value="1"/>
</dbReference>
<dbReference type="SUPFAM" id="SSF101898">
    <property type="entry name" value="NHL repeat"/>
    <property type="match status" value="1"/>
</dbReference>
<dbReference type="PROSITE" id="PS51125">
    <property type="entry name" value="NHL"/>
    <property type="match status" value="5"/>
</dbReference>
<dbReference type="PROSITE" id="PS50119">
    <property type="entry name" value="ZF_BBOX"/>
    <property type="match status" value="2"/>
</dbReference>
<gene>
    <name type="primary">wech</name>
    <name type="synonym">dpld</name>
    <name type="ORF">CG42396</name>
</gene>
<name>WECH_DROME</name>
<accession>Q9V4M2</accession>
<accession>A4IJ45</accession>
<accession>B7YZS8</accession>
<accession>Q0E9G5</accession>
<accession>Q95SY8</accession>
<sequence>MMELLSNNSVPQQMASSNAPSANNVAHSSTANGSGGGSVSSNASNSSERLLAGILESFPAWDLNVGLLPNVGQSSPPRADFFINNFLGGLDTHGDFSIGPIGSGARSNPKMSPESSNNSSISCGWCEVSASIRCLECNEFMCNDCLREHRNSPLSSNHSIVSLPTPIGASPTGGSSVNAQTPPSGNFICDIHNEMLRYVCDYCRKLVCQCCTLHEHKEHSYASIQSFMVGSKEKLEGAIESSQVGTRCIKSSIDKALAFIRLIERNCSELSDNIRKAFRQFIIAIEDRERFLLDFVEKLRQRRLAILHDQMAGLKSALAGLSETSDMLSKVADNACNMDQIEIAMKLTNGQRQMEQFAGIYKDLQPKQEVFAFAPPDYSLLQDIRNQGGVILVDDKNLPIVSSSNGIVPSVSSVNAVAAASVGVVGGVAGVVGGVGVSNGLDLAFGMNMPNNPLSVASSSVRRPLLRDNSFRIPSPIMQPRGGSACGMSSGMSSAALDWELNGLRSSPGLHFSAPRTTQAIPGCMDLVKVRNSNALSLSFATEGHEDGQVSRPWGLCVDKMGHVLVSDRRNNRVQVFNPDGSLKFKFGRKGVGNGEFDLPAGICVDVDNRIIVVDKDNHRVQIFTASGVFLLKFGSYGKEYGQFQYPWDVAVNSRRQIVVTDSRNHRIQQFDSEGRFIRQIVFDNHGQTKGIASPRGVCYTPTGNIIVSDFDNHCLYLIDPDINDILSVKGHEGSGFHEFNRPSGLCCDDEGRIIVADSKNQRILVFNQNLDFMWDIEVRPSINPLMPPTLDEKDRTCDVAIMPDGRIVFLIELSPDSKEGSNPYKRFVHVF</sequence>
<feature type="chain" id="PRO_0000220369" description="Protein wech">
    <location>
        <begin position="1"/>
        <end position="832"/>
    </location>
</feature>
<feature type="repeat" description="NHL 1">
    <location>
        <begin position="537"/>
        <end position="580"/>
    </location>
</feature>
<feature type="repeat" description="NHL 2">
    <location>
        <begin position="584"/>
        <end position="627"/>
    </location>
</feature>
<feature type="repeat" description="NHL 3">
    <location>
        <begin position="631"/>
        <end position="674"/>
    </location>
</feature>
<feature type="repeat" description="NHL 4">
    <location>
        <begin position="680"/>
        <end position="722"/>
    </location>
</feature>
<feature type="repeat" description="NHL 5">
    <location>
        <begin position="727"/>
        <end position="770"/>
    </location>
</feature>
<feature type="zinc finger region" description="B box-type 1" evidence="1">
    <location>
        <begin position="118"/>
        <end position="163"/>
    </location>
</feature>
<feature type="zinc finger region" description="B box-type 2" evidence="1">
    <location>
        <begin position="184"/>
        <end position="224"/>
    </location>
</feature>
<feature type="region of interest" description="Disordered" evidence="2">
    <location>
        <begin position="1"/>
        <end position="42"/>
    </location>
</feature>
<feature type="compositionally biased region" description="Polar residues" evidence="2">
    <location>
        <begin position="1"/>
        <end position="14"/>
    </location>
</feature>
<feature type="compositionally biased region" description="Low complexity" evidence="2">
    <location>
        <begin position="15"/>
        <end position="32"/>
    </location>
</feature>
<feature type="binding site" evidence="1">
    <location>
        <position position="123"/>
    </location>
    <ligand>
        <name>Zn(2+)</name>
        <dbReference type="ChEBI" id="CHEBI:29105"/>
        <label>1</label>
    </ligand>
</feature>
<feature type="binding site" evidence="1">
    <location>
        <position position="126"/>
    </location>
    <ligand>
        <name>Zn(2+)</name>
        <dbReference type="ChEBI" id="CHEBI:29105"/>
        <label>1</label>
    </ligand>
</feature>
<feature type="binding site" evidence="1">
    <location>
        <position position="145"/>
    </location>
    <ligand>
        <name>Zn(2+)</name>
        <dbReference type="ChEBI" id="CHEBI:29105"/>
        <label>1</label>
    </ligand>
</feature>
<feature type="binding site" evidence="1">
    <location>
        <position position="149"/>
    </location>
    <ligand>
        <name>Zn(2+)</name>
        <dbReference type="ChEBI" id="CHEBI:29105"/>
        <label>1</label>
    </ligand>
</feature>
<feature type="binding site" evidence="1">
    <location>
        <position position="189"/>
    </location>
    <ligand>
        <name>Zn(2+)</name>
        <dbReference type="ChEBI" id="CHEBI:29105"/>
        <label>2</label>
    </ligand>
</feature>
<feature type="binding site" evidence="1">
    <location>
        <position position="192"/>
    </location>
    <ligand>
        <name>Zn(2+)</name>
        <dbReference type="ChEBI" id="CHEBI:29105"/>
        <label>2</label>
    </ligand>
</feature>
<feature type="binding site" evidence="1">
    <location>
        <position position="211"/>
    </location>
    <ligand>
        <name>Zn(2+)</name>
        <dbReference type="ChEBI" id="CHEBI:29105"/>
        <label>2</label>
    </ligand>
</feature>
<feature type="binding site" evidence="1">
    <location>
        <position position="216"/>
    </location>
    <ligand>
        <name>Zn(2+)</name>
        <dbReference type="ChEBI" id="CHEBI:29105"/>
        <label>2</label>
    </ligand>
</feature>
<feature type="modified residue" description="Phosphoserine" evidence="4">
    <location>
        <position position="107"/>
    </location>
</feature>
<feature type="modified residue" description="Phosphoserine" evidence="4">
    <location>
        <position position="470"/>
    </location>
</feature>
<feature type="modified residue" description="Phosphoserine" evidence="4">
    <location>
        <position position="475"/>
    </location>
</feature>
<feature type="modified residue" description="Phosphoserine" evidence="4">
    <location>
        <position position="506"/>
    </location>
</feature>
<comment type="function">
    <text evidence="3 7">Vital for larval development. Plays a role in tumor formation. A crucial component for the physical link between integrins and the cytoskeleton in the epidermal muscle attachment sites.</text>
</comment>
<comment type="subunit">
    <text evidence="5 6">Interacts with the head domain of rhea and the kinase domain of Ilk. Interacts with AGO1 (PubMed:18528333). Interacts with mei-P26 (PubMed:22438571).</text>
</comment>
<comment type="tissue specificity">
    <text evidence="3 6 7">Expressed in ovarian germline stem cells (at protein level) (PubMed:22438571). Expressed ubiquitously in all epithelial cells during early stages of embryogenesis. Specifically expressed at epidermal muscle attachment site.</text>
</comment>
<comment type="developmental stage">
    <text evidence="3">Expressed both maternally and zygotically throughout development.</text>
</comment>
<comment type="disruption phenotype">
    <text evidence="3">Muscle detachment in late-stage-16/early-stage-17 embryos.</text>
</comment>
<comment type="miscellaneous">
    <text>'Wech' means 'detached' or 'gone' in German.</text>
</comment>
<comment type="caution">
    <text evidence="9">Was originally termed dappled.</text>
</comment>
<comment type="sequence caution" evidence="8">
    <conflict type="frameshift">
        <sequence resource="EMBL-CDS" id="AAL25460"/>
    </conflict>
</comment>
<organism>
    <name type="scientific">Drosophila melanogaster</name>
    <name type="common">Fruit fly</name>
    <dbReference type="NCBI Taxonomy" id="7227"/>
    <lineage>
        <taxon>Eukaryota</taxon>
        <taxon>Metazoa</taxon>
        <taxon>Ecdysozoa</taxon>
        <taxon>Arthropoda</taxon>
        <taxon>Hexapoda</taxon>
        <taxon>Insecta</taxon>
        <taxon>Pterygota</taxon>
        <taxon>Neoptera</taxon>
        <taxon>Endopterygota</taxon>
        <taxon>Diptera</taxon>
        <taxon>Brachycera</taxon>
        <taxon>Muscomorpha</taxon>
        <taxon>Ephydroidea</taxon>
        <taxon>Drosophilidae</taxon>
        <taxon>Drosophila</taxon>
        <taxon>Sophophora</taxon>
    </lineage>
</organism>
<evidence type="ECO:0000255" key="1">
    <source>
        <dbReference type="PROSITE-ProRule" id="PRU00024"/>
    </source>
</evidence>
<evidence type="ECO:0000256" key="2">
    <source>
        <dbReference type="SAM" id="MobiDB-lite"/>
    </source>
</evidence>
<evidence type="ECO:0000269" key="3">
    <source>
    </source>
</evidence>
<evidence type="ECO:0000269" key="4">
    <source>
    </source>
</evidence>
<evidence type="ECO:0000269" key="5">
    <source>
    </source>
</evidence>
<evidence type="ECO:0000269" key="6">
    <source>
    </source>
</evidence>
<evidence type="ECO:0000269" key="7">
    <source>
    </source>
</evidence>
<evidence type="ECO:0000305" key="8"/>
<evidence type="ECO:0000305" key="9">
    <source>
    </source>
</evidence>